<gene>
    <name type="primary">mical3a</name>
    <name type="ORF">si:dkeyp-122e2.1</name>
</gene>
<sequence>MGDGGVNAVGEGVNQSHMLFDRFVQATTCKGTLKAFQELCDFLELKPNEYRVFYHKLKSKLNYWKAKALWAKLDKRASHKEYKKGRACANTKCLIIGAGPCGLRTAIELGFLGAKVVLLEKRDAFSRNNVLHLWPFTIQDLRGLGAKKFYGKFCAGAIDHISIRQLQLMLLKVALLLGIEIHVNVEFKGLIEPPEDQENERIGWRAEVHPRTHPVNELEFDVIIGADGRRNTLSGFRRKEFRGKLAIAITANFINRNTTAEAKVEEISGVAFIFNQKFFQDLREATGIDLENIVYYKDDTHYFVMTAKKQSLLEKGVILHDYADTEMLLSRANVDQKALLSYAREAADFSTNHQLPKLDFAINHYGQPDVAMFDFTCMYASENAALVRQRNGHKLLVALVGDSLLEPFWPMGTGIARGFLAAMDSAWMVRSWAHGSSPLEVLAERESIYRLLPQTTPENVSKNFSQYSVDPTTRYPNISLHQVRPNQVRHLLDTGETRDLRVDLENVVNSSTPKLTRNESIVRSSKLLNWCQRQTEGYRGVSVSDLTTSWKSGLALCALIHRYRPDLIDFESLDEKDVEKNNQLAFDVAEREFGISPIMTGKEMSVVVEPDKLSMVMYLSQFYEMFKDTVPPGENQNLSPEEKAALIASTKSPISFLSKLGQSIAISRKRNPKDKKEKELDGLGKRRKTSQAGQSEDEELQRANRDDRPSIATALAERKIDSAAAANNNNKVKSMATQLLAKFEENAPTQSTGLKRQGSFRKEFPQNIGGSDVCFFCRKRVYVMERLSAEGKFFHRSCFKCDYCGTTLRLSSYAFDVEDGKFYCKPHYCYRLSGVAQRKRPAPAAAPANAKEPQVLAVSPNTVDAPGQAITTQTPAERRPSETEVNGVTEPSVAKRLKGTPERIELENYRLSMMREEELEEVPEETLAEHNLSSVLDKATDIEEGSSSSESDMEEEDEDAEAAGPSDLGGVPWKEAVELHAKLKGESDPGADDDGLHDGDGEMDEDEEEEEDEEDEDEEEEEESSEEPCEEDDDPEAEAGSPDFEPGTEIDQEDIPSDAEAEARSRCIDEVVTLPVDNDKTESQGQVFNTAEKTSANPRELIVDVVLSPIQKPALPIEEVHEVSPVVLVKSPGARFFPEPYLPDKVKQNIPPPQSPDVKTPHSPVAQIIALSPICSQPVPQPGTASPKSPVQPQPCACSPTGNPLSPICTQSQPCNEPPSPLSTSSPVRTQPVPAVTSTPLAKPASENRTNEHLKDSTPELKKTDLIEEFWLKSAEIRKSLGLTPLERSKTAVEKSIVKTPTPESSSPKSYTPEDLSEEQKPTFTGRSIIRRINITLEGQVISPVEPKSNGSEKKDLSSSSGLGLNGSVTTSQTAASDSYNNSDSTMLTPPSSPPPPPPREEPACLQNKKSQVSWDNLLEGTEEPKSETMPIKPRTPVSPPQPKQKPVTAPVPTPRTNPPVVMRVKEPNKPRREEVRKSFVECVDEIPFADDVEDTYDDRTPDASGLEKFYTPPTSKVNRDKPPLHLALAMENGKPNIPGVSRTAKGSQHFSPEAKEIAEERMRAREKSVKSQALKDAMAKQLTKMKDSEVAKGAVAKVAWDIPETKGKSKKQSKAQKDSAVKALESKKQADTLPDRFFSTPSSKALDSSVTSSESSTGGKSKKRSSLFSPRKNKKEKKAKNERLSSTEETPPKHKSLWKAVFSGYKKDKKKKDDKSCPSTPSSSTTGDSGKKKDSPLDRSSDLRLRRNLSFSEDSDLSCDDVLERSSQKSKGDSVYVPHALAFKRSYATKKTYTEEELNAKLTRRVQKAARRQAKQEELKRLHRAQMIQRQLEQVEEKQRQLEERGVAVEKALRGEADYWGESNYSEILDLHLGGMGKKDDPKLMQEWFKLVQEKNALVRYESELMIFARELELEDRQSRLQQELRERMAIDDHLKTEEELAEEKQILNEMLEVVEQRDSLVALLEEQRLREKEEDKDLEAVMLSKGFNLNWA</sequence>
<organism>
    <name type="scientific">Danio rerio</name>
    <name type="common">Zebrafish</name>
    <name type="synonym">Brachydanio rerio</name>
    <dbReference type="NCBI Taxonomy" id="7955"/>
    <lineage>
        <taxon>Eukaryota</taxon>
        <taxon>Metazoa</taxon>
        <taxon>Chordata</taxon>
        <taxon>Craniata</taxon>
        <taxon>Vertebrata</taxon>
        <taxon>Euteleostomi</taxon>
        <taxon>Actinopterygii</taxon>
        <taxon>Neopterygii</taxon>
        <taxon>Teleostei</taxon>
        <taxon>Ostariophysi</taxon>
        <taxon>Cypriniformes</taxon>
        <taxon>Danionidae</taxon>
        <taxon>Danioninae</taxon>
        <taxon>Danio</taxon>
    </lineage>
</organism>
<feature type="chain" id="PRO_0000416305" description="Protein-methionine sulfoxide oxidase mical3a">
    <location>
        <begin position="1"/>
        <end position="1994"/>
    </location>
</feature>
<feature type="domain" description="Calponin-homology (CH)" evidence="4">
    <location>
        <begin position="521"/>
        <end position="627"/>
    </location>
</feature>
<feature type="domain" description="LIM zinc-binding" evidence="5">
    <location>
        <begin position="772"/>
        <end position="834"/>
    </location>
</feature>
<feature type="domain" description="bMERB" evidence="6">
    <location>
        <begin position="1816"/>
        <end position="1982"/>
    </location>
</feature>
<feature type="region of interest" description="Monooxygenase domain" evidence="1">
    <location>
        <begin position="2"/>
        <end position="498"/>
    </location>
</feature>
<feature type="region of interest" description="Disordered" evidence="7">
    <location>
        <begin position="666"/>
        <end position="708"/>
    </location>
</feature>
<feature type="region of interest" description="Disordered" evidence="7">
    <location>
        <begin position="843"/>
        <end position="900"/>
    </location>
</feature>
<feature type="region of interest" description="Disordered" evidence="7">
    <location>
        <begin position="917"/>
        <end position="1064"/>
    </location>
</feature>
<feature type="region of interest" description="Disordered" evidence="7">
    <location>
        <begin position="1176"/>
        <end position="1263"/>
    </location>
</feature>
<feature type="region of interest" description="Disordered" evidence="7">
    <location>
        <begin position="1281"/>
        <end position="1476"/>
    </location>
</feature>
<feature type="region of interest" description="Disordered" evidence="7">
    <location>
        <begin position="1493"/>
        <end position="1555"/>
    </location>
</feature>
<feature type="region of interest" description="Disordered" evidence="7">
    <location>
        <begin position="1598"/>
        <end position="1747"/>
    </location>
</feature>
<feature type="coiled-coil region" evidence="3">
    <location>
        <begin position="1796"/>
        <end position="1855"/>
    </location>
</feature>
<feature type="coiled-coil region" evidence="3">
    <location>
        <begin position="1894"/>
        <end position="1960"/>
    </location>
</feature>
<feature type="compositionally biased region" description="Basic and acidic residues" evidence="7">
    <location>
        <begin position="674"/>
        <end position="684"/>
    </location>
</feature>
<feature type="compositionally biased region" description="Acidic residues" evidence="7">
    <location>
        <begin position="917"/>
        <end position="926"/>
    </location>
</feature>
<feature type="compositionally biased region" description="Acidic residues" evidence="7">
    <location>
        <begin position="951"/>
        <end position="961"/>
    </location>
</feature>
<feature type="compositionally biased region" description="Basic and acidic residues" evidence="7">
    <location>
        <begin position="975"/>
        <end position="987"/>
    </location>
</feature>
<feature type="compositionally biased region" description="Acidic residues" evidence="7">
    <location>
        <begin position="1001"/>
        <end position="1037"/>
    </location>
</feature>
<feature type="compositionally biased region" description="Acidic residues" evidence="7">
    <location>
        <begin position="1046"/>
        <end position="1060"/>
    </location>
</feature>
<feature type="compositionally biased region" description="Polar residues" evidence="7">
    <location>
        <begin position="1200"/>
        <end position="1215"/>
    </location>
</feature>
<feature type="compositionally biased region" description="Basic and acidic residues" evidence="7">
    <location>
        <begin position="1249"/>
        <end position="1263"/>
    </location>
</feature>
<feature type="compositionally biased region" description="Basic and acidic residues" evidence="7">
    <location>
        <begin position="1287"/>
        <end position="1297"/>
    </location>
</feature>
<feature type="compositionally biased region" description="Low complexity" evidence="7">
    <location>
        <begin position="1299"/>
        <end position="1314"/>
    </location>
</feature>
<feature type="compositionally biased region" description="Low complexity" evidence="7">
    <location>
        <begin position="1358"/>
        <end position="1368"/>
    </location>
</feature>
<feature type="compositionally biased region" description="Polar residues" evidence="7">
    <location>
        <begin position="1369"/>
        <end position="1389"/>
    </location>
</feature>
<feature type="compositionally biased region" description="Pro residues" evidence="7">
    <location>
        <begin position="1437"/>
        <end position="1458"/>
    </location>
</feature>
<feature type="compositionally biased region" description="Basic and acidic residues" evidence="7">
    <location>
        <begin position="1464"/>
        <end position="1476"/>
    </location>
</feature>
<feature type="compositionally biased region" description="Basic and acidic residues" evidence="7">
    <location>
        <begin position="1616"/>
        <end position="1635"/>
    </location>
</feature>
<feature type="compositionally biased region" description="Low complexity" evidence="7">
    <location>
        <begin position="1649"/>
        <end position="1660"/>
    </location>
</feature>
<feature type="compositionally biased region" description="Basic residues" evidence="7">
    <location>
        <begin position="1661"/>
        <end position="1679"/>
    </location>
</feature>
<feature type="compositionally biased region" description="Basic and acidic residues" evidence="7">
    <location>
        <begin position="1680"/>
        <end position="1693"/>
    </location>
</feature>
<feature type="compositionally biased region" description="Low complexity" evidence="7">
    <location>
        <begin position="1718"/>
        <end position="1729"/>
    </location>
</feature>
<feature type="compositionally biased region" description="Basic and acidic residues" evidence="7">
    <location>
        <begin position="1730"/>
        <end position="1746"/>
    </location>
</feature>
<feature type="binding site" evidence="1">
    <location>
        <begin position="101"/>
        <end position="129"/>
    </location>
    <ligand>
        <name>FAD</name>
        <dbReference type="ChEBI" id="CHEBI:57692"/>
    </ligand>
</feature>
<feature type="binding site" evidence="1">
    <location>
        <position position="101"/>
    </location>
    <ligand>
        <name>FAD</name>
        <dbReference type="ChEBI" id="CHEBI:57692"/>
    </ligand>
</feature>
<feature type="binding site" evidence="1">
    <location>
        <position position="120"/>
    </location>
    <ligand>
        <name>FAD</name>
        <dbReference type="ChEBI" id="CHEBI:57692"/>
    </ligand>
</feature>
<feature type="binding site" evidence="1">
    <location>
        <position position="122"/>
    </location>
    <ligand>
        <name>FAD</name>
        <dbReference type="ChEBI" id="CHEBI:57692"/>
    </ligand>
</feature>
<feature type="binding site" evidence="1">
    <location>
        <position position="127"/>
    </location>
    <ligand>
        <name>FAD</name>
        <dbReference type="ChEBI" id="CHEBI:57692"/>
    </ligand>
</feature>
<feature type="binding site" evidence="1">
    <location>
        <position position="129"/>
    </location>
    <ligand>
        <name>FAD</name>
        <dbReference type="ChEBI" id="CHEBI:57692"/>
    </ligand>
</feature>
<feature type="binding site" evidence="1">
    <location>
        <position position="402"/>
    </location>
    <ligand>
        <name>FAD</name>
        <dbReference type="ChEBI" id="CHEBI:57692"/>
    </ligand>
</feature>
<accession>F1QH17</accession>
<accession>Q1LWQ6</accession>
<accession>Q6PBR2</accession>
<reference key="1">
    <citation type="journal article" date="2013" name="Nature">
        <title>The zebrafish reference genome sequence and its relationship to the human genome.</title>
        <authorList>
            <person name="Howe K."/>
            <person name="Clark M.D."/>
            <person name="Torroja C.F."/>
            <person name="Torrance J."/>
            <person name="Berthelot C."/>
            <person name="Muffato M."/>
            <person name="Collins J.E."/>
            <person name="Humphray S."/>
            <person name="McLaren K."/>
            <person name="Matthews L."/>
            <person name="McLaren S."/>
            <person name="Sealy I."/>
            <person name="Caccamo M."/>
            <person name="Churcher C."/>
            <person name="Scott C."/>
            <person name="Barrett J.C."/>
            <person name="Koch R."/>
            <person name="Rauch G.J."/>
            <person name="White S."/>
            <person name="Chow W."/>
            <person name="Kilian B."/>
            <person name="Quintais L.T."/>
            <person name="Guerra-Assuncao J.A."/>
            <person name="Zhou Y."/>
            <person name="Gu Y."/>
            <person name="Yen J."/>
            <person name="Vogel J.H."/>
            <person name="Eyre T."/>
            <person name="Redmond S."/>
            <person name="Banerjee R."/>
            <person name="Chi J."/>
            <person name="Fu B."/>
            <person name="Langley E."/>
            <person name="Maguire S.F."/>
            <person name="Laird G.K."/>
            <person name="Lloyd D."/>
            <person name="Kenyon E."/>
            <person name="Donaldson S."/>
            <person name="Sehra H."/>
            <person name="Almeida-King J."/>
            <person name="Loveland J."/>
            <person name="Trevanion S."/>
            <person name="Jones M."/>
            <person name="Quail M."/>
            <person name="Willey D."/>
            <person name="Hunt A."/>
            <person name="Burton J."/>
            <person name="Sims S."/>
            <person name="McLay K."/>
            <person name="Plumb B."/>
            <person name="Davis J."/>
            <person name="Clee C."/>
            <person name="Oliver K."/>
            <person name="Clark R."/>
            <person name="Riddle C."/>
            <person name="Elliot D."/>
            <person name="Threadgold G."/>
            <person name="Harden G."/>
            <person name="Ware D."/>
            <person name="Begum S."/>
            <person name="Mortimore B."/>
            <person name="Kerry G."/>
            <person name="Heath P."/>
            <person name="Phillimore B."/>
            <person name="Tracey A."/>
            <person name="Corby N."/>
            <person name="Dunn M."/>
            <person name="Johnson C."/>
            <person name="Wood J."/>
            <person name="Clark S."/>
            <person name="Pelan S."/>
            <person name="Griffiths G."/>
            <person name="Smith M."/>
            <person name="Glithero R."/>
            <person name="Howden P."/>
            <person name="Barker N."/>
            <person name="Lloyd C."/>
            <person name="Stevens C."/>
            <person name="Harley J."/>
            <person name="Holt K."/>
            <person name="Panagiotidis G."/>
            <person name="Lovell J."/>
            <person name="Beasley H."/>
            <person name="Henderson C."/>
            <person name="Gordon D."/>
            <person name="Auger K."/>
            <person name="Wright D."/>
            <person name="Collins J."/>
            <person name="Raisen C."/>
            <person name="Dyer L."/>
            <person name="Leung K."/>
            <person name="Robertson L."/>
            <person name="Ambridge K."/>
            <person name="Leongamornlert D."/>
            <person name="McGuire S."/>
            <person name="Gilderthorp R."/>
            <person name="Griffiths C."/>
            <person name="Manthravadi D."/>
            <person name="Nichol S."/>
            <person name="Barker G."/>
            <person name="Whitehead S."/>
            <person name="Kay M."/>
            <person name="Brown J."/>
            <person name="Murnane C."/>
            <person name="Gray E."/>
            <person name="Humphries M."/>
            <person name="Sycamore N."/>
            <person name="Barker D."/>
            <person name="Saunders D."/>
            <person name="Wallis J."/>
            <person name="Babbage A."/>
            <person name="Hammond S."/>
            <person name="Mashreghi-Mohammadi M."/>
            <person name="Barr L."/>
            <person name="Martin S."/>
            <person name="Wray P."/>
            <person name="Ellington A."/>
            <person name="Matthews N."/>
            <person name="Ellwood M."/>
            <person name="Woodmansey R."/>
            <person name="Clark G."/>
            <person name="Cooper J."/>
            <person name="Tromans A."/>
            <person name="Grafham D."/>
            <person name="Skuce C."/>
            <person name="Pandian R."/>
            <person name="Andrews R."/>
            <person name="Harrison E."/>
            <person name="Kimberley A."/>
            <person name="Garnett J."/>
            <person name="Fosker N."/>
            <person name="Hall R."/>
            <person name="Garner P."/>
            <person name="Kelly D."/>
            <person name="Bird C."/>
            <person name="Palmer S."/>
            <person name="Gehring I."/>
            <person name="Berger A."/>
            <person name="Dooley C.M."/>
            <person name="Ersan-Urun Z."/>
            <person name="Eser C."/>
            <person name="Geiger H."/>
            <person name="Geisler M."/>
            <person name="Karotki L."/>
            <person name="Kirn A."/>
            <person name="Konantz J."/>
            <person name="Konantz M."/>
            <person name="Oberlander M."/>
            <person name="Rudolph-Geiger S."/>
            <person name="Teucke M."/>
            <person name="Lanz C."/>
            <person name="Raddatz G."/>
            <person name="Osoegawa K."/>
            <person name="Zhu B."/>
            <person name="Rapp A."/>
            <person name="Widaa S."/>
            <person name="Langford C."/>
            <person name="Yang F."/>
            <person name="Schuster S.C."/>
            <person name="Carter N.P."/>
            <person name="Harrow J."/>
            <person name="Ning Z."/>
            <person name="Herrero J."/>
            <person name="Searle S.M."/>
            <person name="Enright A."/>
            <person name="Geisler R."/>
            <person name="Plasterk R.H."/>
            <person name="Lee C."/>
            <person name="Westerfield M."/>
            <person name="de Jong P.J."/>
            <person name="Zon L.I."/>
            <person name="Postlethwait J.H."/>
            <person name="Nusslein-Volhard C."/>
            <person name="Hubbard T.J."/>
            <person name="Roest Crollius H."/>
            <person name="Rogers J."/>
            <person name="Stemple D.L."/>
        </authorList>
    </citation>
    <scope>NUCLEOTIDE SEQUENCE [LARGE SCALE GENOMIC DNA]</scope>
    <source>
        <strain>Tuebingen</strain>
    </source>
</reference>
<reference key="2">
    <citation type="submission" date="2003-10" db="EMBL/GenBank/DDBJ databases">
        <authorList>
            <consortium name="NIH - Zebrafish Gene Collection (ZGC) project"/>
        </authorList>
    </citation>
    <scope>NUCLEOTIDE SEQUENCE [LARGE SCALE MRNA] OF 1-677</scope>
    <source>
        <tissue>Eye</tissue>
    </source>
</reference>
<dbReference type="EC" id="1.14.13.225" evidence="2"/>
<dbReference type="EMBL" id="AL929264">
    <property type="protein sequence ID" value="CAK04976.1"/>
    <property type="status" value="ALT_SEQ"/>
    <property type="molecule type" value="Genomic_DNA"/>
</dbReference>
<dbReference type="EMBL" id="BX537323">
    <property type="protein sequence ID" value="CAK04976.1"/>
    <property type="status" value="JOINED"/>
    <property type="molecule type" value="Genomic_DNA"/>
</dbReference>
<dbReference type="EMBL" id="BX537323">
    <property type="protein sequence ID" value="CAK11321.1"/>
    <property type="status" value="ALT_SEQ"/>
    <property type="molecule type" value="Genomic_DNA"/>
</dbReference>
<dbReference type="EMBL" id="AL929264">
    <property type="protein sequence ID" value="CAK11321.1"/>
    <property type="status" value="JOINED"/>
    <property type="molecule type" value="Genomic_DNA"/>
</dbReference>
<dbReference type="EMBL" id="BC059615">
    <property type="protein sequence ID" value="AAH59615.1"/>
    <property type="status" value="ALT_SEQ"/>
    <property type="molecule type" value="mRNA"/>
</dbReference>
<dbReference type="SMR" id="F1QH17"/>
<dbReference type="FunCoup" id="F1QH17">
    <property type="interactions" value="1589"/>
</dbReference>
<dbReference type="PaxDb" id="7955-ENSDARP00000037651"/>
<dbReference type="Ensembl" id="ENSDART00000161990">
    <property type="protein sequence ID" value="ENSDARP00000136331"/>
    <property type="gene ID" value="ENSDARG00000097017"/>
</dbReference>
<dbReference type="AGR" id="ZFIN:ZDB-GENE-050126-2"/>
<dbReference type="ZFIN" id="ZDB-GENE-050126-2">
    <property type="gene designation" value="mical3a"/>
</dbReference>
<dbReference type="eggNOG" id="KOG1700">
    <property type="taxonomic scope" value="Eukaryota"/>
</dbReference>
<dbReference type="HOGENOM" id="CLU_000329_1_1_1"/>
<dbReference type="InParanoid" id="F1QH17"/>
<dbReference type="OMA" id="TGECREI"/>
<dbReference type="PRO" id="PR:F1QH17"/>
<dbReference type="Proteomes" id="UP000000437">
    <property type="component" value="Unplaced"/>
</dbReference>
<dbReference type="Bgee" id="ENSDARG00000097017">
    <property type="expression patterns" value="Expressed in muscle tissue and 30 other cell types or tissues"/>
</dbReference>
<dbReference type="ExpressionAtlas" id="F1QH17">
    <property type="expression patterns" value="baseline and differential"/>
</dbReference>
<dbReference type="GO" id="GO:0005737">
    <property type="term" value="C:cytoplasm"/>
    <property type="evidence" value="ECO:0007669"/>
    <property type="project" value="UniProtKB-SubCell"/>
</dbReference>
<dbReference type="GO" id="GO:0005856">
    <property type="term" value="C:cytoskeleton"/>
    <property type="evidence" value="ECO:0007669"/>
    <property type="project" value="UniProtKB-SubCell"/>
</dbReference>
<dbReference type="GO" id="GO:0005634">
    <property type="term" value="C:nucleus"/>
    <property type="evidence" value="ECO:0000250"/>
    <property type="project" value="UniProtKB"/>
</dbReference>
<dbReference type="GO" id="GO:0003779">
    <property type="term" value="F:actin binding"/>
    <property type="evidence" value="ECO:0000250"/>
    <property type="project" value="UniProtKB"/>
</dbReference>
<dbReference type="GO" id="GO:0120501">
    <property type="term" value="F:F-actin monooxygenase activity"/>
    <property type="evidence" value="ECO:0007669"/>
    <property type="project" value="UniProtKB-EC"/>
</dbReference>
<dbReference type="GO" id="GO:0071949">
    <property type="term" value="F:FAD binding"/>
    <property type="evidence" value="ECO:0000250"/>
    <property type="project" value="UniProtKB"/>
</dbReference>
<dbReference type="GO" id="GO:0046872">
    <property type="term" value="F:metal ion binding"/>
    <property type="evidence" value="ECO:0007669"/>
    <property type="project" value="UniProtKB-KW"/>
</dbReference>
<dbReference type="GO" id="GO:0016709">
    <property type="term" value="F:oxidoreductase activity, acting on paired donors, with incorporation or reduction of molecular oxygen, NAD(P)H as one donor, and incorporation of one atom of oxygen"/>
    <property type="evidence" value="ECO:0000250"/>
    <property type="project" value="UniProtKB"/>
</dbReference>
<dbReference type="GO" id="GO:0030042">
    <property type="term" value="P:actin filament depolymerization"/>
    <property type="evidence" value="ECO:0000250"/>
    <property type="project" value="UniProtKB"/>
</dbReference>
<dbReference type="GO" id="GO:0007010">
    <property type="term" value="P:cytoskeleton organization"/>
    <property type="evidence" value="ECO:0000250"/>
    <property type="project" value="UniProtKB"/>
</dbReference>
<dbReference type="GO" id="GO:0006887">
    <property type="term" value="P:exocytosis"/>
    <property type="evidence" value="ECO:0007669"/>
    <property type="project" value="UniProtKB-KW"/>
</dbReference>
<dbReference type="CDD" id="cd21251">
    <property type="entry name" value="CH_MICAL3"/>
    <property type="match status" value="1"/>
</dbReference>
<dbReference type="CDD" id="cd09439">
    <property type="entry name" value="LIM_Mical"/>
    <property type="match status" value="1"/>
</dbReference>
<dbReference type="FunFam" id="3.50.50.60:FF:000004">
    <property type="entry name" value="protein-methionine sulfoxide oxidase MICAL2 isoform X1"/>
    <property type="match status" value="1"/>
</dbReference>
<dbReference type="FunFam" id="1.10.418.10:FF:000026">
    <property type="entry name" value="protein-methionine sulfoxide oxidase MICAL3 isoform X1"/>
    <property type="match status" value="1"/>
</dbReference>
<dbReference type="FunFam" id="2.10.110.10:FF:000043">
    <property type="entry name" value="protein-methionine sulfoxide oxidase MICAL3 isoform X2"/>
    <property type="match status" value="1"/>
</dbReference>
<dbReference type="Gene3D" id="1.10.418.10">
    <property type="entry name" value="Calponin-like domain"/>
    <property type="match status" value="1"/>
</dbReference>
<dbReference type="Gene3D" id="2.10.110.10">
    <property type="entry name" value="Cysteine Rich Protein"/>
    <property type="match status" value="1"/>
</dbReference>
<dbReference type="Gene3D" id="3.50.50.60">
    <property type="entry name" value="FAD/NAD(P)-binding domain"/>
    <property type="match status" value="1"/>
</dbReference>
<dbReference type="InterPro" id="IPR022735">
    <property type="entry name" value="bMERB_dom"/>
</dbReference>
<dbReference type="InterPro" id="IPR001715">
    <property type="entry name" value="CH_dom"/>
</dbReference>
<dbReference type="InterPro" id="IPR036872">
    <property type="entry name" value="CH_dom_sf"/>
</dbReference>
<dbReference type="InterPro" id="IPR050540">
    <property type="entry name" value="F-actin_Monoox_Mical"/>
</dbReference>
<dbReference type="InterPro" id="IPR002938">
    <property type="entry name" value="FAD-bd"/>
</dbReference>
<dbReference type="InterPro" id="IPR036188">
    <property type="entry name" value="FAD/NAD-bd_sf"/>
</dbReference>
<dbReference type="InterPro" id="IPR001781">
    <property type="entry name" value="Znf_LIM"/>
</dbReference>
<dbReference type="PANTHER" id="PTHR23167:SF51">
    <property type="entry name" value="[F-ACTIN]-MONOOXYGENASE MICAL3"/>
    <property type="match status" value="1"/>
</dbReference>
<dbReference type="PANTHER" id="PTHR23167">
    <property type="entry name" value="CALPONIN HOMOLOGY DOMAIN-CONTAINING PROTEIN DDB_G0272472-RELATED"/>
    <property type="match status" value="1"/>
</dbReference>
<dbReference type="Pfam" id="PF12130">
    <property type="entry name" value="bMERB_dom"/>
    <property type="match status" value="1"/>
</dbReference>
<dbReference type="Pfam" id="PF00307">
    <property type="entry name" value="CH"/>
    <property type="match status" value="1"/>
</dbReference>
<dbReference type="Pfam" id="PF01494">
    <property type="entry name" value="FAD_binding_3"/>
    <property type="match status" value="1"/>
</dbReference>
<dbReference type="Pfam" id="PF00412">
    <property type="entry name" value="LIM"/>
    <property type="match status" value="1"/>
</dbReference>
<dbReference type="Pfam" id="PF25413">
    <property type="entry name" value="Rossman_Mical"/>
    <property type="match status" value="1"/>
</dbReference>
<dbReference type="PRINTS" id="PR00420">
    <property type="entry name" value="RNGMNOXGNASE"/>
</dbReference>
<dbReference type="SMART" id="SM00033">
    <property type="entry name" value="CH"/>
    <property type="match status" value="1"/>
</dbReference>
<dbReference type="SMART" id="SM01203">
    <property type="entry name" value="DUF3585"/>
    <property type="match status" value="1"/>
</dbReference>
<dbReference type="SMART" id="SM00132">
    <property type="entry name" value="LIM"/>
    <property type="match status" value="1"/>
</dbReference>
<dbReference type="SUPFAM" id="SSF47576">
    <property type="entry name" value="Calponin-homology domain, CH-domain"/>
    <property type="match status" value="1"/>
</dbReference>
<dbReference type="SUPFAM" id="SSF51905">
    <property type="entry name" value="FAD/NAD(P)-binding domain"/>
    <property type="match status" value="1"/>
</dbReference>
<dbReference type="SUPFAM" id="SSF57716">
    <property type="entry name" value="Glucocorticoid receptor-like (DNA-binding domain)"/>
    <property type="match status" value="2"/>
</dbReference>
<dbReference type="PROSITE" id="PS51848">
    <property type="entry name" value="BMERB"/>
    <property type="match status" value="1"/>
</dbReference>
<dbReference type="PROSITE" id="PS50021">
    <property type="entry name" value="CH"/>
    <property type="match status" value="1"/>
</dbReference>
<dbReference type="PROSITE" id="PS00478">
    <property type="entry name" value="LIM_DOMAIN_1"/>
    <property type="match status" value="1"/>
</dbReference>
<dbReference type="PROSITE" id="PS50023">
    <property type="entry name" value="LIM_DOMAIN_2"/>
    <property type="match status" value="1"/>
</dbReference>
<proteinExistence type="evidence at transcript level"/>
<protein>
    <recommendedName>
        <fullName>Protein-methionine sulfoxide oxidase mical3a</fullName>
        <ecNumber evidence="2">1.14.13.225</ecNumber>
    </recommendedName>
    <alternativeName>
        <fullName>Molecule interacting with CasL protein 3A</fullName>
        <shortName>MICAL-3A</shortName>
    </alternativeName>
</protein>
<keyword id="KW-0009">Actin-binding</keyword>
<keyword id="KW-0175">Coiled coil</keyword>
<keyword id="KW-0963">Cytoplasm</keyword>
<keyword id="KW-0206">Cytoskeleton</keyword>
<keyword id="KW-0268">Exocytosis</keyword>
<keyword id="KW-0274">FAD</keyword>
<keyword id="KW-0285">Flavoprotein</keyword>
<keyword id="KW-0440">LIM domain</keyword>
<keyword id="KW-0479">Metal-binding</keyword>
<keyword id="KW-0503">Monooxygenase</keyword>
<keyword id="KW-0521">NADP</keyword>
<keyword id="KW-0539">Nucleus</keyword>
<keyword id="KW-0560">Oxidoreductase</keyword>
<keyword id="KW-1185">Reference proteome</keyword>
<keyword id="KW-0862">Zinc</keyword>
<name>MCA3A_DANRE</name>
<evidence type="ECO:0000250" key="1"/>
<evidence type="ECO:0000250" key="2">
    <source>
        <dbReference type="UniProtKB" id="Q7RTP6"/>
    </source>
</evidence>
<evidence type="ECO:0000255" key="3"/>
<evidence type="ECO:0000255" key="4">
    <source>
        <dbReference type="PROSITE-ProRule" id="PRU00044"/>
    </source>
</evidence>
<evidence type="ECO:0000255" key="5">
    <source>
        <dbReference type="PROSITE-ProRule" id="PRU00125"/>
    </source>
</evidence>
<evidence type="ECO:0000255" key="6">
    <source>
        <dbReference type="PROSITE-ProRule" id="PRU01195"/>
    </source>
</evidence>
<evidence type="ECO:0000256" key="7">
    <source>
        <dbReference type="SAM" id="MobiDB-lite"/>
    </source>
</evidence>
<evidence type="ECO:0000305" key="8"/>
<comment type="function">
    <text evidence="1">Monooxygenase that promotes depolymerization of F-actin by mediating oxidation of specific methionine residues on actin. Acts by modifying actin subunits through the addition of oxygen to form methionine-sulfoxide, leading to promote actin filament severing and prevent repolymerization. Involved in exocytic vesicles tethering and fusion: the monooxygenase activity is required for this process (By similarity).</text>
</comment>
<comment type="catalytic activity">
    <reaction evidence="2">
        <text>L-methionyl-[F-actin] + NADPH + O2 + H(+) = L-methionyl-(R)-S-oxide-[F-actin] + NADP(+) + H2O</text>
        <dbReference type="Rhea" id="RHEA:51308"/>
        <dbReference type="Rhea" id="RHEA-COMP:12953"/>
        <dbReference type="Rhea" id="RHEA-COMP:12956"/>
        <dbReference type="ChEBI" id="CHEBI:15377"/>
        <dbReference type="ChEBI" id="CHEBI:15378"/>
        <dbReference type="ChEBI" id="CHEBI:15379"/>
        <dbReference type="ChEBI" id="CHEBI:16044"/>
        <dbReference type="ChEBI" id="CHEBI:45764"/>
        <dbReference type="ChEBI" id="CHEBI:57783"/>
        <dbReference type="ChEBI" id="CHEBI:58349"/>
        <dbReference type="EC" id="1.14.13.225"/>
    </reaction>
</comment>
<comment type="cofactor">
    <cofactor evidence="1">
        <name>FAD</name>
        <dbReference type="ChEBI" id="CHEBI:57692"/>
    </cofactor>
</comment>
<comment type="subcellular location">
    <subcellularLocation>
        <location>Cytoplasm</location>
    </subcellularLocation>
    <subcellularLocation>
        <location>Cytoplasm</location>
        <location>Cytoskeleton</location>
    </subcellularLocation>
    <subcellularLocation>
        <location>Nucleus</location>
    </subcellularLocation>
    <text evidence="1">Mainly localizes in the nucleus.</text>
</comment>
<comment type="similarity">
    <text evidence="8">Belongs to the Mical family.</text>
</comment>
<comment type="sequence caution" evidence="8">
    <conflict type="miscellaneous discrepancy">
        <sequence resource="EMBL-CDS" id="AAH59615"/>
    </conflict>
    <text>Contaminating sequence. Potential poly-A sequence.</text>
</comment>
<comment type="sequence caution" evidence="8">
    <conflict type="erroneous gene model prediction">
        <sequence resource="EMBL-CDS" id="CAK04976"/>
    </conflict>
</comment>
<comment type="sequence caution" evidence="8">
    <conflict type="erroneous gene model prediction">
        <sequence resource="EMBL-CDS" id="CAK11321"/>
    </conflict>
</comment>